<name>Y2282_MYCTU</name>
<gene>
    <name type="ordered locus">Rv2282c</name>
    <name type="ORF">MTCY339.28</name>
</gene>
<reference key="1">
    <citation type="journal article" date="1998" name="Nature">
        <title>Deciphering the biology of Mycobacterium tuberculosis from the complete genome sequence.</title>
        <authorList>
            <person name="Cole S.T."/>
            <person name="Brosch R."/>
            <person name="Parkhill J."/>
            <person name="Garnier T."/>
            <person name="Churcher C.M."/>
            <person name="Harris D.E."/>
            <person name="Gordon S.V."/>
            <person name="Eiglmeier K."/>
            <person name="Gas S."/>
            <person name="Barry C.E. III"/>
            <person name="Tekaia F."/>
            <person name="Badcock K."/>
            <person name="Basham D."/>
            <person name="Brown D."/>
            <person name="Chillingworth T."/>
            <person name="Connor R."/>
            <person name="Davies R.M."/>
            <person name="Devlin K."/>
            <person name="Feltwell T."/>
            <person name="Gentles S."/>
            <person name="Hamlin N."/>
            <person name="Holroyd S."/>
            <person name="Hornsby T."/>
            <person name="Jagels K."/>
            <person name="Krogh A."/>
            <person name="McLean J."/>
            <person name="Moule S."/>
            <person name="Murphy L.D."/>
            <person name="Oliver S."/>
            <person name="Osborne J."/>
            <person name="Quail M.A."/>
            <person name="Rajandream M.A."/>
            <person name="Rogers J."/>
            <person name="Rutter S."/>
            <person name="Seeger K."/>
            <person name="Skelton S."/>
            <person name="Squares S."/>
            <person name="Squares R."/>
            <person name="Sulston J.E."/>
            <person name="Taylor K."/>
            <person name="Whitehead S."/>
            <person name="Barrell B.G."/>
        </authorList>
    </citation>
    <scope>NUCLEOTIDE SEQUENCE [LARGE SCALE GENOMIC DNA]</scope>
    <source>
        <strain>ATCC 25618 / H37Rv</strain>
    </source>
</reference>
<reference key="2">
    <citation type="journal article" date="2011" name="Mol. Cell. Proteomics">
        <title>Proteogenomic analysis of Mycobacterium tuberculosis by high resolution mass spectrometry.</title>
        <authorList>
            <person name="Kelkar D.S."/>
            <person name="Kumar D."/>
            <person name="Kumar P."/>
            <person name="Balakrishnan L."/>
            <person name="Muthusamy B."/>
            <person name="Yadav A.K."/>
            <person name="Shrivastava P."/>
            <person name="Marimuthu A."/>
            <person name="Anand S."/>
            <person name="Sundaram H."/>
            <person name="Kingsbury R."/>
            <person name="Harsha H.C."/>
            <person name="Nair B."/>
            <person name="Prasad T.S."/>
            <person name="Chauhan D.S."/>
            <person name="Katoch K."/>
            <person name="Katoch V.M."/>
            <person name="Kumar P."/>
            <person name="Chaerkady R."/>
            <person name="Ramachandran S."/>
            <person name="Dash D."/>
            <person name="Pandey A."/>
        </authorList>
    </citation>
    <scope>IDENTIFICATION BY MASS SPECTROMETRY [LARGE SCALE ANALYSIS]</scope>
    <source>
        <strain>ATCC 25618 / H37Rv</strain>
    </source>
</reference>
<organism>
    <name type="scientific">Mycobacterium tuberculosis (strain ATCC 25618 / H37Rv)</name>
    <dbReference type="NCBI Taxonomy" id="83332"/>
    <lineage>
        <taxon>Bacteria</taxon>
        <taxon>Bacillati</taxon>
        <taxon>Actinomycetota</taxon>
        <taxon>Actinomycetes</taxon>
        <taxon>Mycobacteriales</taxon>
        <taxon>Mycobacteriaceae</taxon>
        <taxon>Mycobacterium</taxon>
        <taxon>Mycobacterium tuberculosis complex</taxon>
    </lineage>
</organism>
<dbReference type="EMBL" id="AL123456">
    <property type="protein sequence ID" value="CCP45064.1"/>
    <property type="molecule type" value="Genomic_DNA"/>
</dbReference>
<dbReference type="PIR" id="F70731">
    <property type="entry name" value="F70731"/>
</dbReference>
<dbReference type="RefSeq" id="NP_216798.1">
    <property type="nucleotide sequence ID" value="NC_000962.3"/>
</dbReference>
<dbReference type="RefSeq" id="WP_003411696.1">
    <property type="nucleotide sequence ID" value="NZ_NVQJ01000012.1"/>
</dbReference>
<dbReference type="SMR" id="P9WMF3"/>
<dbReference type="FunCoup" id="P9WMF3">
    <property type="interactions" value="22"/>
</dbReference>
<dbReference type="STRING" id="83332.Rv2282c"/>
<dbReference type="PaxDb" id="83332-Rv2282c"/>
<dbReference type="DNASU" id="887253"/>
<dbReference type="GeneID" id="887253"/>
<dbReference type="KEGG" id="mtu:Rv2282c"/>
<dbReference type="KEGG" id="mtv:RVBD_2282c"/>
<dbReference type="TubercuList" id="Rv2282c"/>
<dbReference type="eggNOG" id="COG0583">
    <property type="taxonomic scope" value="Bacteria"/>
</dbReference>
<dbReference type="InParanoid" id="P9WMF3"/>
<dbReference type="OrthoDB" id="9808620at2"/>
<dbReference type="PhylomeDB" id="P9WMF3"/>
<dbReference type="Proteomes" id="UP000001584">
    <property type="component" value="Chromosome"/>
</dbReference>
<dbReference type="GO" id="GO:0005829">
    <property type="term" value="C:cytosol"/>
    <property type="evidence" value="ECO:0007005"/>
    <property type="project" value="MTBBASE"/>
</dbReference>
<dbReference type="GO" id="GO:0003700">
    <property type="term" value="F:DNA-binding transcription factor activity"/>
    <property type="evidence" value="ECO:0007669"/>
    <property type="project" value="InterPro"/>
</dbReference>
<dbReference type="GO" id="GO:0000976">
    <property type="term" value="F:transcription cis-regulatory region binding"/>
    <property type="evidence" value="ECO:0000318"/>
    <property type="project" value="GO_Central"/>
</dbReference>
<dbReference type="GO" id="GO:0006355">
    <property type="term" value="P:regulation of DNA-templated transcription"/>
    <property type="evidence" value="ECO:0000318"/>
    <property type="project" value="GO_Central"/>
</dbReference>
<dbReference type="Gene3D" id="3.40.190.10">
    <property type="entry name" value="Periplasmic binding protein-like II"/>
    <property type="match status" value="2"/>
</dbReference>
<dbReference type="Gene3D" id="1.10.10.10">
    <property type="entry name" value="Winged helix-like DNA-binding domain superfamily/Winged helix DNA-binding domain"/>
    <property type="match status" value="1"/>
</dbReference>
<dbReference type="InterPro" id="IPR005119">
    <property type="entry name" value="LysR_subst-bd"/>
</dbReference>
<dbReference type="InterPro" id="IPR000847">
    <property type="entry name" value="Tscrpt_reg_HTH_LysR"/>
</dbReference>
<dbReference type="InterPro" id="IPR036388">
    <property type="entry name" value="WH-like_DNA-bd_sf"/>
</dbReference>
<dbReference type="InterPro" id="IPR036390">
    <property type="entry name" value="WH_DNA-bd_sf"/>
</dbReference>
<dbReference type="PANTHER" id="PTHR30126">
    <property type="entry name" value="HTH-TYPE TRANSCRIPTIONAL REGULATOR"/>
    <property type="match status" value="1"/>
</dbReference>
<dbReference type="PANTHER" id="PTHR30126:SF39">
    <property type="entry name" value="HTH-TYPE TRANSCRIPTIONAL REGULATOR CYSL"/>
    <property type="match status" value="1"/>
</dbReference>
<dbReference type="Pfam" id="PF00126">
    <property type="entry name" value="HTH_1"/>
    <property type="match status" value="1"/>
</dbReference>
<dbReference type="Pfam" id="PF03466">
    <property type="entry name" value="LysR_substrate"/>
    <property type="match status" value="1"/>
</dbReference>
<dbReference type="SUPFAM" id="SSF53850">
    <property type="entry name" value="Periplasmic binding protein-like II"/>
    <property type="match status" value="1"/>
</dbReference>
<dbReference type="SUPFAM" id="SSF46785">
    <property type="entry name" value="Winged helix' DNA-binding domain"/>
    <property type="match status" value="1"/>
</dbReference>
<dbReference type="PROSITE" id="PS50931">
    <property type="entry name" value="HTH_LYSR"/>
    <property type="match status" value="1"/>
</dbReference>
<feature type="chain" id="PRO_0000105814" description="Uncharacterized HTH-type transcriptional regulator Rv2282c">
    <location>
        <begin position="1"/>
        <end position="312"/>
    </location>
</feature>
<feature type="domain" description="HTH lysR-type" evidence="1">
    <location>
        <begin position="8"/>
        <end position="65"/>
    </location>
</feature>
<feature type="DNA-binding region" description="H-T-H motif" evidence="1">
    <location>
        <begin position="25"/>
        <end position="45"/>
    </location>
</feature>
<protein>
    <recommendedName>
        <fullName>Uncharacterized HTH-type transcriptional regulator Rv2282c</fullName>
    </recommendedName>
</protein>
<proteinExistence type="evidence at protein level"/>
<keyword id="KW-0238">DNA-binding</keyword>
<keyword id="KW-1185">Reference proteome</keyword>
<keyword id="KW-0804">Transcription</keyword>
<keyword id="KW-0805">Transcription regulation</keyword>
<evidence type="ECO:0000255" key="1">
    <source>
        <dbReference type="PROSITE-ProRule" id="PRU00253"/>
    </source>
</evidence>
<evidence type="ECO:0000305" key="2"/>
<comment type="similarity">
    <text evidence="2">Belongs to the LysR transcriptional regulatory family.</text>
</comment>
<accession>P9WMF3</accession>
<accession>L0T957</accession>
<accession>P67667</accession>
<accession>Q50683</accession>
<sequence>MPLSSRMPGLTCFEIFLAIAEAGSLGGAARELGLTQQAVSRRLASMEAQIGVRLAIRTTRGSQLTPAGIVVAEWAARLLEVADEIDAGLGSLRTEGRQRIRVVASQTIAEQLMPHWMLSLRAADMRRGGTVPEVILTATNSEHAIAAVRDGIADLGFIENPCPPTGLGSVVVARDELVVVVPPGHKWARRSRVVSARELAQTPLVTREPNSGIRDSLTAALRDTLGEDMQQAPPVLELSSAAAVRAAVLAGAGPAAMSRLAIADDLAFGRLLAVDIPALNLRRQLRAIWVGGRTPPAGAIRDLLSHITSRST</sequence>